<feature type="initiator methionine" description="Removed" evidence="39">
    <location>
        <position position="1"/>
    </location>
</feature>
<feature type="chain" id="PRO_0000218974" description="E3 SUMO-protein ligase PIAS1">
    <location>
        <begin position="2"/>
        <end position="651"/>
    </location>
</feature>
<feature type="domain" description="SAP" evidence="4">
    <location>
        <begin position="11"/>
        <end position="45"/>
    </location>
</feature>
<feature type="domain" description="PINIT" evidence="6">
    <location>
        <begin position="124"/>
        <end position="288"/>
    </location>
</feature>
<feature type="repeat" description="1">
    <location>
        <begin position="520"/>
        <end position="523"/>
    </location>
</feature>
<feature type="repeat" description="2">
    <location>
        <begin position="557"/>
        <end position="560"/>
    </location>
</feature>
<feature type="repeat" description="3; approximate">
    <location>
        <begin position="598"/>
        <end position="601"/>
    </location>
</feature>
<feature type="repeat" description="4; approximate">
    <location>
        <begin position="612"/>
        <end position="615"/>
    </location>
</feature>
<feature type="zinc finger region" description="SP-RING-type" evidence="5">
    <location>
        <begin position="320"/>
        <end position="405"/>
    </location>
</feature>
<feature type="region of interest" description="Required for interaction with MSX1" evidence="2">
    <location>
        <begin position="2"/>
        <end position="200"/>
    </location>
</feature>
<feature type="region of interest" description="SUMO1-binding" evidence="1">
    <location>
        <begin position="462"/>
        <end position="473"/>
    </location>
</feature>
<feature type="region of interest" description="Disordered" evidence="7">
    <location>
        <begin position="465"/>
        <end position="511"/>
    </location>
</feature>
<feature type="region of interest" description="4 X 4 AA repeats of N-T-S-L">
    <location>
        <begin position="520"/>
        <end position="615"/>
    </location>
</feature>
<feature type="region of interest" description="Disordered" evidence="7">
    <location>
        <begin position="599"/>
        <end position="632"/>
    </location>
</feature>
<feature type="short sequence motif" description="LXXLL motif">
    <location>
        <begin position="19"/>
        <end position="23"/>
    </location>
</feature>
<feature type="short sequence motif" description="Nuclear localization signal" evidence="3">
    <location>
        <begin position="56"/>
        <end position="64"/>
    </location>
</feature>
<feature type="short sequence motif" description="Nuclear localization signal" evidence="3">
    <location>
        <begin position="368"/>
        <end position="380"/>
    </location>
</feature>
<feature type="compositionally biased region" description="Polar residues" evidence="7">
    <location>
        <begin position="482"/>
        <end position="491"/>
    </location>
</feature>
<feature type="compositionally biased region" description="Low complexity" evidence="7">
    <location>
        <begin position="599"/>
        <end position="621"/>
    </location>
</feature>
<feature type="binding site" evidence="5">
    <location>
        <position position="351"/>
    </location>
    <ligand>
        <name>Zn(2+)</name>
        <dbReference type="ChEBI" id="CHEBI:29105"/>
    </ligand>
</feature>
<feature type="binding site" evidence="5">
    <location>
        <position position="353"/>
    </location>
    <ligand>
        <name>Zn(2+)</name>
        <dbReference type="ChEBI" id="CHEBI:29105"/>
    </ligand>
</feature>
<feature type="binding site" evidence="5">
    <location>
        <position position="374"/>
    </location>
    <ligand>
        <name>Zn(2+)</name>
        <dbReference type="ChEBI" id="CHEBI:29105"/>
    </ligand>
</feature>
<feature type="binding site" evidence="5">
    <location>
        <position position="377"/>
    </location>
    <ligand>
        <name>Zn(2+)</name>
        <dbReference type="ChEBI" id="CHEBI:29105"/>
    </ligand>
</feature>
<feature type="site" description="Cleavage; by caspase-6 and -8" evidence="27">
    <location>
        <position position="100"/>
    </location>
</feature>
<feature type="site" description="Cleavage; by caspase-3, -6, and -8" evidence="27">
    <location>
        <position position="433"/>
    </location>
</feature>
<feature type="modified residue" description="N-acetylalanine" evidence="39">
    <location>
        <position position="2"/>
    </location>
</feature>
<feature type="modified residue" description="Phosphoserine" evidence="41">
    <location>
        <position position="467"/>
    </location>
</feature>
<feature type="modified residue" description="Phosphoserine" evidence="41">
    <location>
        <position position="468"/>
    </location>
</feature>
<feature type="modified residue" description="Phosphoserine" evidence="2">
    <location>
        <position position="483"/>
    </location>
</feature>
<feature type="modified residue" description="Phosphoserine" evidence="40">
    <location>
        <position position="485"/>
    </location>
</feature>
<feature type="modified residue" description="Phosphothreonine" evidence="2">
    <location>
        <position position="487"/>
    </location>
</feature>
<feature type="modified residue" description="Phosphoserine" evidence="40">
    <location>
        <position position="488"/>
    </location>
</feature>
<feature type="modified residue" description="Phosphoserine" evidence="36 37 38 40 41">
    <location>
        <position position="503"/>
    </location>
</feature>
<feature type="modified residue" description="Phosphoserine" evidence="37">
    <location>
        <position position="510"/>
    </location>
</feature>
<feature type="modified residue" description="Phosphoserine" evidence="36">
    <location>
        <position position="522"/>
    </location>
</feature>
<feature type="cross-link" description="Glycyl lysine isopeptide (Lys-Gly) (interchain with G-Cter in SUMO2)" evidence="45">
    <location>
        <position position="40"/>
    </location>
</feature>
<feature type="cross-link" description="Glycyl lysine isopeptide (Lys-Gly) (interchain with G-Cter in SUMO2)" evidence="42 43 44 45">
    <location>
        <position position="46"/>
    </location>
</feature>
<feature type="cross-link" description="Glycyl lysine isopeptide (Lys-Gly) (interchain with G-Cter in SUMO2)" evidence="43 44 45">
    <location>
        <position position="137"/>
    </location>
</feature>
<feature type="cross-link" description="Glycyl lysine isopeptide (Lys-Gly) (interchain with G-Cter in SUMO2)" evidence="42 44 45">
    <location>
        <position position="238"/>
    </location>
</feature>
<feature type="cross-link" description="Glycyl lysine isopeptide (Lys-Gly) (interchain with G-Cter in SUMO2)" evidence="45">
    <location>
        <position position="453"/>
    </location>
</feature>
<feature type="cross-link" description="Glycyl lysine isopeptide (Lys-Gly) (interchain with G-Cter in SUMO2)" evidence="45">
    <location>
        <position position="493"/>
    </location>
</feature>
<feature type="splice variant" id="VSP_056219" description="In isoform 2." evidence="31">
    <original>MADSAEL</original>
    <variation>MFTLQDSYV</variation>
    <location>
        <begin position="1"/>
        <end position="7"/>
    </location>
</feature>
<feature type="splice variant" id="VSP_057195" description="In isoform 3." evidence="32">
    <original>IKEKLTADPDSEIA</original>
    <variation>STYDKLISLIQLFC</variation>
    <location>
        <begin position="312"/>
        <end position="325"/>
    </location>
</feature>
<feature type="splice variant" id="VSP_057196" description="In isoform 3." evidence="32">
    <location>
        <begin position="326"/>
        <end position="651"/>
    </location>
</feature>
<feature type="mutagenesis site" description="Completely blocks cleavage by caspase-3, -6, and -8 and dramatic suppression of EBV DNA replication; when associated with A-433." evidence="27">
    <original>D</original>
    <variation>A</variation>
    <location>
        <position position="100"/>
    </location>
</feature>
<feature type="mutagenesis site" description="No effect on cleavages by caspase-6 and -8." evidence="27">
    <original>D</original>
    <variation>A</variation>
    <location>
        <position position="148"/>
    </location>
</feature>
<feature type="mutagenesis site" description="Loss of UBE2I-binding; almost complete loss of promotion of TP53 sumoylation; no loss of SUMO1- and TP53-binding." evidence="9">
    <original>C</original>
    <variation>A</variation>
    <variation>S</variation>
    <location>
        <position position="351"/>
    </location>
</feature>
<feature type="mutagenesis site" description="Completely blocks cleavage by caspase-3, -6, and -8 and dramatic suppression of EBV DNA replication; when associated with A-100." evidence="27">
    <original>D</original>
    <variation>A</variation>
    <location>
        <position position="433"/>
    </location>
</feature>
<feature type="sequence conflict" description="In Ref. 1; AAC36702." evidence="33" ref="1">
    <original>E</original>
    <variation>K</variation>
    <location>
        <position position="119"/>
    </location>
</feature>
<feature type="sequence conflict" description="In Ref. 1; AAC36702." evidence="33" ref="1">
    <original>IVV</original>
    <variation>MC</variation>
    <location>
        <begin position="266"/>
        <end position="268"/>
    </location>
</feature>
<feature type="sequence conflict" description="In Ref. 6; AAB58488." evidence="33" ref="6">
    <original>S</original>
    <variation>T</variation>
    <location>
        <position position="613"/>
    </location>
</feature>
<feature type="helix" evidence="46">
    <location>
        <begin position="6"/>
        <end position="11"/>
    </location>
</feature>
<feature type="helix" evidence="46">
    <location>
        <begin position="16"/>
        <end position="24"/>
    </location>
</feature>
<feature type="helix" evidence="46">
    <location>
        <begin position="34"/>
        <end position="46"/>
    </location>
</feature>
<feature type="helix" evidence="46">
    <location>
        <begin position="51"/>
        <end position="63"/>
    </location>
</feature>
<protein>
    <recommendedName>
        <fullName>E3 SUMO-protein ligase PIAS1</fullName>
        <ecNumber evidence="28">2.3.2.-</ecNumber>
    </recommendedName>
    <alternativeName>
        <fullName>DEAD/H box-binding protein 1</fullName>
    </alternativeName>
    <alternativeName>
        <fullName evidence="33">E3 SUMO-protein transferase PIAS1</fullName>
    </alternativeName>
    <alternativeName>
        <fullName>Gu-binding protein</fullName>
        <shortName>GBP</shortName>
    </alternativeName>
    <alternativeName>
        <fullName>Protein inhibitor of activated STAT protein 1</fullName>
    </alternativeName>
    <alternativeName>
        <fullName>RNA helicase II-binding protein</fullName>
    </alternativeName>
</protein>
<organism>
    <name type="scientific">Homo sapiens</name>
    <name type="common">Human</name>
    <dbReference type="NCBI Taxonomy" id="9606"/>
    <lineage>
        <taxon>Eukaryota</taxon>
        <taxon>Metazoa</taxon>
        <taxon>Chordata</taxon>
        <taxon>Craniata</taxon>
        <taxon>Vertebrata</taxon>
        <taxon>Euteleostomi</taxon>
        <taxon>Mammalia</taxon>
        <taxon>Eutheria</taxon>
        <taxon>Euarchontoglires</taxon>
        <taxon>Primates</taxon>
        <taxon>Haplorrhini</taxon>
        <taxon>Catarrhini</taxon>
        <taxon>Hominidae</taxon>
        <taxon>Homo</taxon>
    </lineage>
</organism>
<gene>
    <name type="primary">PIAS1</name>
    <name type="synonym">DDXBP1</name>
</gene>
<name>PIAS1_HUMAN</name>
<evidence type="ECO:0000250" key="1"/>
<evidence type="ECO:0000250" key="2">
    <source>
        <dbReference type="UniProtKB" id="O88907"/>
    </source>
</evidence>
<evidence type="ECO:0000255" key="3"/>
<evidence type="ECO:0000255" key="4">
    <source>
        <dbReference type="PROSITE-ProRule" id="PRU00186"/>
    </source>
</evidence>
<evidence type="ECO:0000255" key="5">
    <source>
        <dbReference type="PROSITE-ProRule" id="PRU00452"/>
    </source>
</evidence>
<evidence type="ECO:0000255" key="6">
    <source>
        <dbReference type="PROSITE-ProRule" id="PRU00799"/>
    </source>
</evidence>
<evidence type="ECO:0000256" key="7">
    <source>
        <dbReference type="SAM" id="MobiDB-lite"/>
    </source>
</evidence>
<evidence type="ECO:0000269" key="8">
    <source>
    </source>
</evidence>
<evidence type="ECO:0000269" key="9">
    <source>
    </source>
</evidence>
<evidence type="ECO:0000269" key="10">
    <source>
    </source>
</evidence>
<evidence type="ECO:0000269" key="11">
    <source>
    </source>
</evidence>
<evidence type="ECO:0000269" key="12">
    <source>
    </source>
</evidence>
<evidence type="ECO:0000269" key="13">
    <source>
    </source>
</evidence>
<evidence type="ECO:0000269" key="14">
    <source>
    </source>
</evidence>
<evidence type="ECO:0000269" key="15">
    <source>
    </source>
</evidence>
<evidence type="ECO:0000269" key="16">
    <source>
    </source>
</evidence>
<evidence type="ECO:0000269" key="17">
    <source>
    </source>
</evidence>
<evidence type="ECO:0000269" key="18">
    <source>
    </source>
</evidence>
<evidence type="ECO:0000269" key="19">
    <source>
    </source>
</evidence>
<evidence type="ECO:0000269" key="20">
    <source>
    </source>
</evidence>
<evidence type="ECO:0000269" key="21">
    <source>
    </source>
</evidence>
<evidence type="ECO:0000269" key="22">
    <source>
    </source>
</evidence>
<evidence type="ECO:0000269" key="23">
    <source>
    </source>
</evidence>
<evidence type="ECO:0000269" key="24">
    <source>
    </source>
</evidence>
<evidence type="ECO:0000269" key="25">
    <source>
    </source>
</evidence>
<evidence type="ECO:0000269" key="26">
    <source>
    </source>
</evidence>
<evidence type="ECO:0000269" key="27">
    <source>
    </source>
</evidence>
<evidence type="ECO:0000269" key="28">
    <source>
    </source>
</evidence>
<evidence type="ECO:0000269" key="29">
    <source>
    </source>
</evidence>
<evidence type="ECO:0000269" key="30">
    <source>
    </source>
</evidence>
<evidence type="ECO:0000303" key="31">
    <source>
    </source>
</evidence>
<evidence type="ECO:0000303" key="32">
    <source>
    </source>
</evidence>
<evidence type="ECO:0000305" key="33"/>
<evidence type="ECO:0000305" key="34">
    <source>
    </source>
</evidence>
<evidence type="ECO:0000305" key="35">
    <source>
    </source>
</evidence>
<evidence type="ECO:0007744" key="36">
    <source>
    </source>
</evidence>
<evidence type="ECO:0007744" key="37">
    <source>
    </source>
</evidence>
<evidence type="ECO:0007744" key="38">
    <source>
    </source>
</evidence>
<evidence type="ECO:0007744" key="39">
    <source>
    </source>
</evidence>
<evidence type="ECO:0007744" key="40">
    <source>
    </source>
</evidence>
<evidence type="ECO:0007744" key="41">
    <source>
    </source>
</evidence>
<evidence type="ECO:0007744" key="42">
    <source>
    </source>
</evidence>
<evidence type="ECO:0007744" key="43">
    <source>
    </source>
</evidence>
<evidence type="ECO:0007744" key="44">
    <source>
    </source>
</evidence>
<evidence type="ECO:0007744" key="45">
    <source>
    </source>
</evidence>
<evidence type="ECO:0007829" key="46">
    <source>
        <dbReference type="PDB" id="1V66"/>
    </source>
</evidence>
<dbReference type="EC" id="2.3.2.-" evidence="28"/>
<dbReference type="EMBL" id="AF077951">
    <property type="protein sequence ID" value="AAC36702.1"/>
    <property type="molecule type" value="mRNA"/>
</dbReference>
<dbReference type="EMBL" id="AF167160">
    <property type="protein sequence ID" value="AAD49722.1"/>
    <property type="molecule type" value="mRNA"/>
</dbReference>
<dbReference type="EMBL" id="FJ997900">
    <property type="protein sequence ID" value="ACR77525.1"/>
    <property type="molecule type" value="mRNA"/>
</dbReference>
<dbReference type="EMBL" id="AK094641">
    <property type="protein sequence ID" value="BAG52901.1"/>
    <property type="molecule type" value="mRNA"/>
</dbReference>
<dbReference type="EMBL" id="AK314515">
    <property type="protein sequence ID" value="BAG37114.1"/>
    <property type="molecule type" value="mRNA"/>
</dbReference>
<dbReference type="EMBL" id="AC107871">
    <property type="status" value="NOT_ANNOTATED_CDS"/>
    <property type="molecule type" value="Genomic_DNA"/>
</dbReference>
<dbReference type="EMBL" id="AC135628">
    <property type="status" value="NOT_ANNOTATED_CDS"/>
    <property type="molecule type" value="Genomic_DNA"/>
</dbReference>
<dbReference type="EMBL" id="BC118587">
    <property type="protein sequence ID" value="AAI18588.1"/>
    <property type="molecule type" value="mRNA"/>
</dbReference>
<dbReference type="EMBL" id="BC121797">
    <property type="protein sequence ID" value="AAI21798.1"/>
    <property type="molecule type" value="mRNA"/>
</dbReference>
<dbReference type="EMBL" id="U78524">
    <property type="protein sequence ID" value="AAB58488.1"/>
    <property type="molecule type" value="mRNA"/>
</dbReference>
<dbReference type="CCDS" id="CCDS45290.1">
    <molecule id="O75925-1"/>
</dbReference>
<dbReference type="CCDS" id="CCDS81902.1">
    <molecule id="O75925-2"/>
</dbReference>
<dbReference type="RefSeq" id="NP_001307616.1">
    <molecule id="O75925-2"/>
    <property type="nucleotide sequence ID" value="NM_001320687.1"/>
</dbReference>
<dbReference type="RefSeq" id="NP_057250.1">
    <molecule id="O75925-1"/>
    <property type="nucleotide sequence ID" value="NM_016166.3"/>
</dbReference>
<dbReference type="RefSeq" id="XP_016878177.1">
    <molecule id="O75925-2"/>
    <property type="nucleotide sequence ID" value="XM_017022688.2"/>
</dbReference>
<dbReference type="RefSeq" id="XP_054235009.1">
    <molecule id="O75925-2"/>
    <property type="nucleotide sequence ID" value="XM_054379034.1"/>
</dbReference>
<dbReference type="PDB" id="1V66">
    <property type="method" value="NMR"/>
    <property type="chains" value="A=1-65"/>
</dbReference>
<dbReference type="PDBsum" id="1V66"/>
<dbReference type="BMRB" id="O75925"/>
<dbReference type="SMR" id="O75925"/>
<dbReference type="BioGRID" id="114124">
    <property type="interactions" value="337"/>
</dbReference>
<dbReference type="CORUM" id="O75925"/>
<dbReference type="DIP" id="DIP-5970N"/>
<dbReference type="ELM" id="O75925"/>
<dbReference type="FunCoup" id="O75925">
    <property type="interactions" value="4602"/>
</dbReference>
<dbReference type="IntAct" id="O75925">
    <property type="interactions" value="120"/>
</dbReference>
<dbReference type="MINT" id="O75925"/>
<dbReference type="STRING" id="9606.ENSP00000438574"/>
<dbReference type="GlyGen" id="O75925">
    <property type="glycosylation" value="2 sites, 1 N-linked glycan (1 site), 1 O-linked glycan (1 site)"/>
</dbReference>
<dbReference type="iPTMnet" id="O75925"/>
<dbReference type="PhosphoSitePlus" id="O75925"/>
<dbReference type="BioMuta" id="PIAS1"/>
<dbReference type="jPOST" id="O75925"/>
<dbReference type="MassIVE" id="O75925"/>
<dbReference type="PaxDb" id="9606-ENSP00000249636"/>
<dbReference type="PeptideAtlas" id="O75925"/>
<dbReference type="ProteomicsDB" id="3657"/>
<dbReference type="ProteomicsDB" id="50293">
    <molecule id="O75925-1"/>
</dbReference>
<dbReference type="Pumba" id="O75925"/>
<dbReference type="Antibodypedia" id="26284">
    <property type="antibodies" value="360 antibodies from 35 providers"/>
</dbReference>
<dbReference type="DNASU" id="8554"/>
<dbReference type="Ensembl" id="ENST00000249636.11">
    <molecule id="O75925-1"/>
    <property type="protein sequence ID" value="ENSP00000249636.6"/>
    <property type="gene ID" value="ENSG00000033800.14"/>
</dbReference>
<dbReference type="Ensembl" id="ENST00000545237.1">
    <molecule id="O75925-2"/>
    <property type="protein sequence ID" value="ENSP00000438574.1"/>
    <property type="gene ID" value="ENSG00000033800.14"/>
</dbReference>
<dbReference type="GeneID" id="8554"/>
<dbReference type="KEGG" id="hsa:8554"/>
<dbReference type="MANE-Select" id="ENST00000249636.11">
    <property type="protein sequence ID" value="ENSP00000249636.6"/>
    <property type="RefSeq nucleotide sequence ID" value="NM_016166.3"/>
    <property type="RefSeq protein sequence ID" value="NP_057250.1"/>
</dbReference>
<dbReference type="UCSC" id="uc002aqz.4">
    <molecule id="O75925-1"/>
    <property type="organism name" value="human"/>
</dbReference>
<dbReference type="AGR" id="HGNC:2752"/>
<dbReference type="CTD" id="8554"/>
<dbReference type="DisGeNET" id="8554"/>
<dbReference type="GeneCards" id="PIAS1"/>
<dbReference type="HGNC" id="HGNC:2752">
    <property type="gene designation" value="PIAS1"/>
</dbReference>
<dbReference type="HPA" id="ENSG00000033800">
    <property type="expression patterns" value="Low tissue specificity"/>
</dbReference>
<dbReference type="MIM" id="603566">
    <property type="type" value="gene"/>
</dbReference>
<dbReference type="neXtProt" id="NX_O75925"/>
<dbReference type="OpenTargets" id="ENSG00000033800"/>
<dbReference type="PharmGKB" id="PA33285"/>
<dbReference type="VEuPathDB" id="HostDB:ENSG00000033800"/>
<dbReference type="eggNOG" id="KOG2169">
    <property type="taxonomic scope" value="Eukaryota"/>
</dbReference>
<dbReference type="GeneTree" id="ENSGT01030000234539"/>
<dbReference type="HOGENOM" id="CLU_020768_3_0_1"/>
<dbReference type="InParanoid" id="O75925"/>
<dbReference type="OMA" id="PASPMNN"/>
<dbReference type="OrthoDB" id="10263264at2759"/>
<dbReference type="PAN-GO" id="O75925">
    <property type="GO annotations" value="4 GO annotations based on evolutionary models"/>
</dbReference>
<dbReference type="PhylomeDB" id="O75925"/>
<dbReference type="TreeFam" id="TF323787"/>
<dbReference type="PathwayCommons" id="O75925"/>
<dbReference type="Reactome" id="R-HSA-3108214">
    <property type="pathway name" value="SUMOylation of DNA damage response and repair proteins"/>
</dbReference>
<dbReference type="Reactome" id="R-HSA-3232118">
    <property type="pathway name" value="SUMOylation of transcription factors"/>
</dbReference>
<dbReference type="Reactome" id="R-HSA-3232142">
    <property type="pathway name" value="SUMOylation of ubiquitinylation proteins"/>
</dbReference>
<dbReference type="Reactome" id="R-HSA-3899300">
    <property type="pathway name" value="SUMOylation of transcription cofactors"/>
</dbReference>
<dbReference type="Reactome" id="R-HSA-4090294">
    <property type="pathway name" value="SUMOylation of intracellular receptors"/>
</dbReference>
<dbReference type="Reactome" id="R-HSA-4551638">
    <property type="pathway name" value="SUMOylation of chromatin organization proteins"/>
</dbReference>
<dbReference type="Reactome" id="R-HSA-5696395">
    <property type="pathway name" value="Formation of Incision Complex in GG-NER"/>
</dbReference>
<dbReference type="Reactome" id="R-HSA-877312">
    <property type="pathway name" value="Regulation of IFNG signaling"/>
</dbReference>
<dbReference type="SignaLink" id="O75925"/>
<dbReference type="SIGNOR" id="O75925"/>
<dbReference type="UniPathway" id="UPA00886"/>
<dbReference type="BioGRID-ORCS" id="8554">
    <property type="hits" value="89 hits in 1123 CRISPR screens"/>
</dbReference>
<dbReference type="CD-CODE" id="804901D1">
    <property type="entry name" value="Nuclear speckle"/>
</dbReference>
<dbReference type="CD-CODE" id="B5B9A610">
    <property type="entry name" value="PML body"/>
</dbReference>
<dbReference type="ChiTaRS" id="PIAS1">
    <property type="organism name" value="human"/>
</dbReference>
<dbReference type="EvolutionaryTrace" id="O75925"/>
<dbReference type="GeneWiki" id="PIAS1"/>
<dbReference type="GenomeRNAi" id="8554"/>
<dbReference type="Pharos" id="O75925">
    <property type="development level" value="Tbio"/>
</dbReference>
<dbReference type="PRO" id="PR:O75925"/>
<dbReference type="Proteomes" id="UP000005640">
    <property type="component" value="Chromosome 15"/>
</dbReference>
<dbReference type="RNAct" id="O75925">
    <property type="molecule type" value="protein"/>
</dbReference>
<dbReference type="Bgee" id="ENSG00000033800">
    <property type="expression patterns" value="Expressed in secondary oocyte and 215 other cell types or tissues"/>
</dbReference>
<dbReference type="ExpressionAtlas" id="O75925">
    <property type="expression patterns" value="baseline and differential"/>
</dbReference>
<dbReference type="GO" id="GO:0000785">
    <property type="term" value="C:chromatin"/>
    <property type="evidence" value="ECO:0000318"/>
    <property type="project" value="GO_Central"/>
</dbReference>
<dbReference type="GO" id="GO:0005856">
    <property type="term" value="C:cytoskeleton"/>
    <property type="evidence" value="ECO:0007669"/>
    <property type="project" value="UniProtKB-SubCell"/>
</dbReference>
<dbReference type="GO" id="GO:0098978">
    <property type="term" value="C:glutamatergic synapse"/>
    <property type="evidence" value="ECO:0007669"/>
    <property type="project" value="Ensembl"/>
</dbReference>
<dbReference type="GO" id="GO:0034399">
    <property type="term" value="C:nuclear periphery"/>
    <property type="evidence" value="ECO:0000250"/>
    <property type="project" value="UniProtKB"/>
</dbReference>
<dbReference type="GO" id="GO:0016607">
    <property type="term" value="C:nuclear speck"/>
    <property type="evidence" value="ECO:0007669"/>
    <property type="project" value="UniProtKB-SubCell"/>
</dbReference>
<dbReference type="GO" id="GO:0005654">
    <property type="term" value="C:nucleoplasm"/>
    <property type="evidence" value="ECO:0000304"/>
    <property type="project" value="Reactome"/>
</dbReference>
<dbReference type="GO" id="GO:0005634">
    <property type="term" value="C:nucleus"/>
    <property type="evidence" value="ECO:0000314"/>
    <property type="project" value="UniProtKB"/>
</dbReference>
<dbReference type="GO" id="GO:0016605">
    <property type="term" value="C:PML body"/>
    <property type="evidence" value="ECO:0007669"/>
    <property type="project" value="UniProtKB-SubCell"/>
</dbReference>
<dbReference type="GO" id="GO:0099524">
    <property type="term" value="C:postsynaptic cytosol"/>
    <property type="evidence" value="ECO:0007669"/>
    <property type="project" value="Ensembl"/>
</dbReference>
<dbReference type="GO" id="GO:0099523">
    <property type="term" value="C:presynaptic cytosol"/>
    <property type="evidence" value="ECO:0007669"/>
    <property type="project" value="Ensembl"/>
</dbReference>
<dbReference type="GO" id="GO:0140297">
    <property type="term" value="F:DNA-binding transcription factor binding"/>
    <property type="evidence" value="ECO:0007669"/>
    <property type="project" value="Ensembl"/>
</dbReference>
<dbReference type="GO" id="GO:0019899">
    <property type="term" value="F:enzyme binding"/>
    <property type="evidence" value="ECO:0000353"/>
    <property type="project" value="UniProtKB"/>
</dbReference>
<dbReference type="GO" id="GO:0019904">
    <property type="term" value="F:protein domain specific binding"/>
    <property type="evidence" value="ECO:0007669"/>
    <property type="project" value="Ensembl"/>
</dbReference>
<dbReference type="GO" id="GO:0061665">
    <property type="term" value="F:SUMO ligase activity"/>
    <property type="evidence" value="ECO:0000314"/>
    <property type="project" value="UniProtKB"/>
</dbReference>
<dbReference type="GO" id="GO:0019789">
    <property type="term" value="F:SUMO transferase activity"/>
    <property type="evidence" value="ECO:0000269"/>
    <property type="project" value="Reactome"/>
</dbReference>
<dbReference type="GO" id="GO:0000976">
    <property type="term" value="F:transcription cis-regulatory region binding"/>
    <property type="evidence" value="ECO:0000250"/>
    <property type="project" value="UniProtKB"/>
</dbReference>
<dbReference type="GO" id="GO:0003712">
    <property type="term" value="F:transcription coregulator activity"/>
    <property type="evidence" value="ECO:0000318"/>
    <property type="project" value="GO_Central"/>
</dbReference>
<dbReference type="GO" id="GO:0003714">
    <property type="term" value="F:transcription corepressor activity"/>
    <property type="evidence" value="ECO:0000304"/>
    <property type="project" value="ProtInc"/>
</dbReference>
<dbReference type="GO" id="GO:0031625">
    <property type="term" value="F:ubiquitin protein ligase binding"/>
    <property type="evidence" value="ECO:0007669"/>
    <property type="project" value="Ensembl"/>
</dbReference>
<dbReference type="GO" id="GO:0008270">
    <property type="term" value="F:zinc ion binding"/>
    <property type="evidence" value="ECO:0007669"/>
    <property type="project" value="UniProtKB-KW"/>
</dbReference>
<dbReference type="GO" id="GO:0007259">
    <property type="term" value="P:cell surface receptor signaling pathway via JAK-STAT"/>
    <property type="evidence" value="ECO:0000304"/>
    <property type="project" value="ProtInc"/>
</dbReference>
<dbReference type="GO" id="GO:0006974">
    <property type="term" value="P:DNA damage response"/>
    <property type="evidence" value="ECO:0000314"/>
    <property type="project" value="UniProt"/>
</dbReference>
<dbReference type="GO" id="GO:0045444">
    <property type="term" value="P:fat cell differentiation"/>
    <property type="evidence" value="ECO:0007669"/>
    <property type="project" value="Ensembl"/>
</dbReference>
<dbReference type="GO" id="GO:0000082">
    <property type="term" value="P:G1/S transition of mitotic cell cycle"/>
    <property type="evidence" value="ECO:0007669"/>
    <property type="project" value="Ensembl"/>
</dbReference>
<dbReference type="GO" id="GO:0043066">
    <property type="term" value="P:negative regulation of apoptotic process"/>
    <property type="evidence" value="ECO:0007669"/>
    <property type="project" value="Ensembl"/>
</dbReference>
<dbReference type="GO" id="GO:0000122">
    <property type="term" value="P:negative regulation of transcription by RNA polymerase II"/>
    <property type="evidence" value="ECO:0000250"/>
    <property type="project" value="UniProtKB"/>
</dbReference>
<dbReference type="GO" id="GO:0045893">
    <property type="term" value="P:positive regulation of DNA-templated transcription"/>
    <property type="evidence" value="ECO:0007669"/>
    <property type="project" value="Ensembl"/>
</dbReference>
<dbReference type="GO" id="GO:0032436">
    <property type="term" value="P:positive regulation of proteasomal ubiquitin-dependent protein catabolic process"/>
    <property type="evidence" value="ECO:0000250"/>
    <property type="project" value="UniProtKB"/>
</dbReference>
<dbReference type="GO" id="GO:1904377">
    <property type="term" value="P:positive regulation of protein localization to cell periphery"/>
    <property type="evidence" value="ECO:0007669"/>
    <property type="project" value="Ensembl"/>
</dbReference>
<dbReference type="GO" id="GO:0033235">
    <property type="term" value="P:positive regulation of protein sumoylation"/>
    <property type="evidence" value="ECO:0000314"/>
    <property type="project" value="UniProtKB"/>
</dbReference>
<dbReference type="GO" id="GO:0051152">
    <property type="term" value="P:positive regulation of smooth muscle cell differentiation"/>
    <property type="evidence" value="ECO:0007669"/>
    <property type="project" value="Ensembl"/>
</dbReference>
<dbReference type="GO" id="GO:0016925">
    <property type="term" value="P:protein sumoylation"/>
    <property type="evidence" value="ECO:0000314"/>
    <property type="project" value="BHF-UCL"/>
</dbReference>
<dbReference type="GO" id="GO:0065004">
    <property type="term" value="P:protein-DNA complex assembly"/>
    <property type="evidence" value="ECO:0007669"/>
    <property type="project" value="Ensembl"/>
</dbReference>
<dbReference type="GO" id="GO:0042127">
    <property type="term" value="P:regulation of cell population proliferation"/>
    <property type="evidence" value="ECO:0000250"/>
    <property type="project" value="UniProtKB"/>
</dbReference>
<dbReference type="GO" id="GO:0006357">
    <property type="term" value="P:regulation of transcription by RNA polymerase II"/>
    <property type="evidence" value="ECO:0000318"/>
    <property type="project" value="GO_Central"/>
</dbReference>
<dbReference type="GO" id="GO:0007283">
    <property type="term" value="P:spermatogenesis"/>
    <property type="evidence" value="ECO:0007669"/>
    <property type="project" value="Ensembl"/>
</dbReference>
<dbReference type="GO" id="GO:0008542">
    <property type="term" value="P:visual learning"/>
    <property type="evidence" value="ECO:0007669"/>
    <property type="project" value="Ensembl"/>
</dbReference>
<dbReference type="CDD" id="cd16818">
    <property type="entry name" value="SP-RING_PIAS1"/>
    <property type="match status" value="1"/>
</dbReference>
<dbReference type="FunFam" id="1.10.720.30:FF:000001">
    <property type="entry name" value="E3 SUMO-protein ligase PIAS2 isoform 1"/>
    <property type="match status" value="1"/>
</dbReference>
<dbReference type="FunFam" id="2.60.120.780:FF:000001">
    <property type="entry name" value="E3 SUMO-protein ligase PIAS2 isoform X1"/>
    <property type="match status" value="1"/>
</dbReference>
<dbReference type="FunFam" id="3.30.40.10:FF:000003">
    <property type="entry name" value="E3 SUMO-protein ligase PIAS2 isoform X1"/>
    <property type="match status" value="1"/>
</dbReference>
<dbReference type="Gene3D" id="2.60.120.780">
    <property type="entry name" value="PINIT domain"/>
    <property type="match status" value="1"/>
</dbReference>
<dbReference type="Gene3D" id="1.10.720.30">
    <property type="entry name" value="SAP domain"/>
    <property type="match status" value="1"/>
</dbReference>
<dbReference type="Gene3D" id="3.30.40.10">
    <property type="entry name" value="Zinc/RING finger domain, C3HC4 (zinc finger)"/>
    <property type="match status" value="1"/>
</dbReference>
<dbReference type="InterPro" id="IPR023321">
    <property type="entry name" value="PINIT"/>
</dbReference>
<dbReference type="InterPro" id="IPR038654">
    <property type="entry name" value="PINIT_sf"/>
</dbReference>
<dbReference type="InterPro" id="IPR003034">
    <property type="entry name" value="SAP_dom"/>
</dbReference>
<dbReference type="InterPro" id="IPR036361">
    <property type="entry name" value="SAP_dom_sf"/>
</dbReference>
<dbReference type="InterPro" id="IPR004181">
    <property type="entry name" value="Znf_MIZ"/>
</dbReference>
<dbReference type="InterPro" id="IPR013083">
    <property type="entry name" value="Znf_RING/FYVE/PHD"/>
</dbReference>
<dbReference type="PANTHER" id="PTHR10782:SF11">
    <property type="entry name" value="E3 SUMO-PROTEIN LIGASE PIAS1"/>
    <property type="match status" value="1"/>
</dbReference>
<dbReference type="PANTHER" id="PTHR10782">
    <property type="entry name" value="ZINC FINGER MIZ DOMAIN-CONTAINING PROTEIN"/>
    <property type="match status" value="1"/>
</dbReference>
<dbReference type="Pfam" id="PF14324">
    <property type="entry name" value="PINIT"/>
    <property type="match status" value="1"/>
</dbReference>
<dbReference type="Pfam" id="PF02891">
    <property type="entry name" value="zf-MIZ"/>
    <property type="match status" value="1"/>
</dbReference>
<dbReference type="SMART" id="SM00513">
    <property type="entry name" value="SAP"/>
    <property type="match status" value="1"/>
</dbReference>
<dbReference type="SUPFAM" id="SSF68906">
    <property type="entry name" value="SAP domain"/>
    <property type="match status" value="1"/>
</dbReference>
<dbReference type="PROSITE" id="PS51466">
    <property type="entry name" value="PINIT"/>
    <property type="match status" value="1"/>
</dbReference>
<dbReference type="PROSITE" id="PS50800">
    <property type="entry name" value="SAP"/>
    <property type="match status" value="1"/>
</dbReference>
<dbReference type="PROSITE" id="PS51044">
    <property type="entry name" value="ZF_SP_RING"/>
    <property type="match status" value="1"/>
</dbReference>
<reference key="1">
    <citation type="journal article" date="1998" name="Proc. Natl. Acad. Sci. U.S.A.">
        <title>Inhibition of Stat1-mediated gene activation by PIAS1.</title>
        <authorList>
            <person name="Liu B."/>
            <person name="Liao J."/>
            <person name="Rao X."/>
            <person name="Kushner S.A."/>
            <person name="Chung C.D."/>
            <person name="Chang D.D."/>
            <person name="Shuai K."/>
        </authorList>
    </citation>
    <scope>NUCLEOTIDE SEQUENCE [MRNA] (ISOFORM 1)</scope>
    <scope>INTERACTION WITH STAT1</scope>
    <source>
        <tissue>B-cell</tissue>
    </source>
</reference>
<reference key="2">
    <citation type="journal article" date="2000" name="Mol. Endocrinol.">
        <title>Protein inhibitor of activated STAT-1 (signal transducer and activator of transcription-1) is a nuclear receptor coregulator expressed in human testis.</title>
        <authorList>
            <person name="Tan J."/>
            <person name="Hall S.H."/>
            <person name="Hamil K.G."/>
            <person name="Grossman G."/>
            <person name="Petrusz P."/>
            <person name="Liao J."/>
            <person name="Shuai K."/>
            <person name="French F.S."/>
        </authorList>
    </citation>
    <scope>NUCLEOTIDE SEQUENCE [MRNA] (ISOFORM 1)</scope>
</reference>
<reference key="3">
    <citation type="journal article" date="2009" name="BMC Genomics">
        <title>Discovery of novel human transcript variants by analysis of intronic single-block EST with polyadenylation site.</title>
        <authorList>
            <person name="Wang P."/>
            <person name="Yu P."/>
            <person name="Gao P."/>
            <person name="Shi T."/>
            <person name="Ma D."/>
        </authorList>
    </citation>
    <scope>NUCLEOTIDE SEQUENCE [MRNA] (ISOFORM 3)</scope>
</reference>
<reference key="4">
    <citation type="journal article" date="2004" name="Nat. Genet.">
        <title>Complete sequencing and characterization of 21,243 full-length human cDNAs.</title>
        <authorList>
            <person name="Ota T."/>
            <person name="Suzuki Y."/>
            <person name="Nishikawa T."/>
            <person name="Otsuki T."/>
            <person name="Sugiyama T."/>
            <person name="Irie R."/>
            <person name="Wakamatsu A."/>
            <person name="Hayashi K."/>
            <person name="Sato H."/>
            <person name="Nagai K."/>
            <person name="Kimura K."/>
            <person name="Makita H."/>
            <person name="Sekine M."/>
            <person name="Obayashi M."/>
            <person name="Nishi T."/>
            <person name="Shibahara T."/>
            <person name="Tanaka T."/>
            <person name="Ishii S."/>
            <person name="Yamamoto J."/>
            <person name="Saito K."/>
            <person name="Kawai Y."/>
            <person name="Isono Y."/>
            <person name="Nakamura Y."/>
            <person name="Nagahari K."/>
            <person name="Murakami K."/>
            <person name="Yasuda T."/>
            <person name="Iwayanagi T."/>
            <person name="Wagatsuma M."/>
            <person name="Shiratori A."/>
            <person name="Sudo H."/>
            <person name="Hosoiri T."/>
            <person name="Kaku Y."/>
            <person name="Kodaira H."/>
            <person name="Kondo H."/>
            <person name="Sugawara M."/>
            <person name="Takahashi M."/>
            <person name="Kanda K."/>
            <person name="Yokoi T."/>
            <person name="Furuya T."/>
            <person name="Kikkawa E."/>
            <person name="Omura Y."/>
            <person name="Abe K."/>
            <person name="Kamihara K."/>
            <person name="Katsuta N."/>
            <person name="Sato K."/>
            <person name="Tanikawa M."/>
            <person name="Yamazaki M."/>
            <person name="Ninomiya K."/>
            <person name="Ishibashi T."/>
            <person name="Yamashita H."/>
            <person name="Murakawa K."/>
            <person name="Fujimori K."/>
            <person name="Tanai H."/>
            <person name="Kimata M."/>
            <person name="Watanabe M."/>
            <person name="Hiraoka S."/>
            <person name="Chiba Y."/>
            <person name="Ishida S."/>
            <person name="Ono Y."/>
            <person name="Takiguchi S."/>
            <person name="Watanabe S."/>
            <person name="Yosida M."/>
            <person name="Hotuta T."/>
            <person name="Kusano J."/>
            <person name="Kanehori K."/>
            <person name="Takahashi-Fujii A."/>
            <person name="Hara H."/>
            <person name="Tanase T.-O."/>
            <person name="Nomura Y."/>
            <person name="Togiya S."/>
            <person name="Komai F."/>
            <person name="Hara R."/>
            <person name="Takeuchi K."/>
            <person name="Arita M."/>
            <person name="Imose N."/>
            <person name="Musashino K."/>
            <person name="Yuuki H."/>
            <person name="Oshima A."/>
            <person name="Sasaki N."/>
            <person name="Aotsuka S."/>
            <person name="Yoshikawa Y."/>
            <person name="Matsunawa H."/>
            <person name="Ichihara T."/>
            <person name="Shiohata N."/>
            <person name="Sano S."/>
            <person name="Moriya S."/>
            <person name="Momiyama H."/>
            <person name="Satoh N."/>
            <person name="Takami S."/>
            <person name="Terashima Y."/>
            <person name="Suzuki O."/>
            <person name="Nakagawa S."/>
            <person name="Senoh A."/>
            <person name="Mizoguchi H."/>
            <person name="Goto Y."/>
            <person name="Shimizu F."/>
            <person name="Wakebe H."/>
            <person name="Hishigaki H."/>
            <person name="Watanabe T."/>
            <person name="Sugiyama A."/>
            <person name="Takemoto M."/>
            <person name="Kawakami B."/>
            <person name="Yamazaki M."/>
            <person name="Watanabe K."/>
            <person name="Kumagai A."/>
            <person name="Itakura S."/>
            <person name="Fukuzumi Y."/>
            <person name="Fujimori Y."/>
            <person name="Komiyama M."/>
            <person name="Tashiro H."/>
            <person name="Tanigami A."/>
            <person name="Fujiwara T."/>
            <person name="Ono T."/>
            <person name="Yamada K."/>
            <person name="Fujii Y."/>
            <person name="Ozaki K."/>
            <person name="Hirao M."/>
            <person name="Ohmori Y."/>
            <person name="Kawabata A."/>
            <person name="Hikiji T."/>
            <person name="Kobatake N."/>
            <person name="Inagaki H."/>
            <person name="Ikema Y."/>
            <person name="Okamoto S."/>
            <person name="Okitani R."/>
            <person name="Kawakami T."/>
            <person name="Noguchi S."/>
            <person name="Itoh T."/>
            <person name="Shigeta K."/>
            <person name="Senba T."/>
            <person name="Matsumura K."/>
            <person name="Nakajima Y."/>
            <person name="Mizuno T."/>
            <person name="Morinaga M."/>
            <person name="Sasaki M."/>
            <person name="Togashi T."/>
            <person name="Oyama M."/>
            <person name="Hata H."/>
            <person name="Watanabe M."/>
            <person name="Komatsu T."/>
            <person name="Mizushima-Sugano J."/>
            <person name="Satoh T."/>
            <person name="Shirai Y."/>
            <person name="Takahashi Y."/>
            <person name="Nakagawa K."/>
            <person name="Okumura K."/>
            <person name="Nagase T."/>
            <person name="Nomura N."/>
            <person name="Kikuchi H."/>
            <person name="Masuho Y."/>
            <person name="Yamashita R."/>
            <person name="Nakai K."/>
            <person name="Yada T."/>
            <person name="Nakamura Y."/>
            <person name="Ohara O."/>
            <person name="Isogai T."/>
            <person name="Sugano S."/>
        </authorList>
    </citation>
    <scope>NUCLEOTIDE SEQUENCE [LARGE SCALE MRNA] (ISOFORMS 1 AND 2)</scope>
    <source>
        <tissue>Amygdala</tissue>
        <tissue>Trachea</tissue>
    </source>
</reference>
<reference key="5">
    <citation type="journal article" date="2006" name="Nature">
        <title>Analysis of the DNA sequence and duplication history of human chromosome 15.</title>
        <authorList>
            <person name="Zody M.C."/>
            <person name="Garber M."/>
            <person name="Sharpe T."/>
            <person name="Young S.K."/>
            <person name="Rowen L."/>
            <person name="O'Neill K."/>
            <person name="Whittaker C.A."/>
            <person name="Kamal M."/>
            <person name="Chang J.L."/>
            <person name="Cuomo C.A."/>
            <person name="Dewar K."/>
            <person name="FitzGerald M.G."/>
            <person name="Kodira C.D."/>
            <person name="Madan A."/>
            <person name="Qin S."/>
            <person name="Yang X."/>
            <person name="Abbasi N."/>
            <person name="Abouelleil A."/>
            <person name="Arachchi H.M."/>
            <person name="Baradarani L."/>
            <person name="Birditt B."/>
            <person name="Bloom S."/>
            <person name="Bloom T."/>
            <person name="Borowsky M.L."/>
            <person name="Burke J."/>
            <person name="Butler J."/>
            <person name="Cook A."/>
            <person name="DeArellano K."/>
            <person name="DeCaprio D."/>
            <person name="Dorris L. III"/>
            <person name="Dors M."/>
            <person name="Eichler E.E."/>
            <person name="Engels R."/>
            <person name="Fahey J."/>
            <person name="Fleetwood P."/>
            <person name="Friedman C."/>
            <person name="Gearin G."/>
            <person name="Hall J.L."/>
            <person name="Hensley G."/>
            <person name="Johnson E."/>
            <person name="Jones C."/>
            <person name="Kamat A."/>
            <person name="Kaur A."/>
            <person name="Locke D.P."/>
            <person name="Madan A."/>
            <person name="Munson G."/>
            <person name="Jaffe D.B."/>
            <person name="Lui A."/>
            <person name="Macdonald P."/>
            <person name="Mauceli E."/>
            <person name="Naylor J.W."/>
            <person name="Nesbitt R."/>
            <person name="Nicol R."/>
            <person name="O'Leary S.B."/>
            <person name="Ratcliffe A."/>
            <person name="Rounsley S."/>
            <person name="She X."/>
            <person name="Sneddon K.M.B."/>
            <person name="Stewart S."/>
            <person name="Sougnez C."/>
            <person name="Stone S.M."/>
            <person name="Topham K."/>
            <person name="Vincent D."/>
            <person name="Wang S."/>
            <person name="Zimmer A.R."/>
            <person name="Birren B.W."/>
            <person name="Hood L."/>
            <person name="Lander E.S."/>
            <person name="Nusbaum C."/>
        </authorList>
    </citation>
    <scope>NUCLEOTIDE SEQUENCE [LARGE SCALE GENOMIC DNA]</scope>
</reference>
<reference key="6">
    <citation type="journal article" date="2004" name="Genome Res.">
        <title>The status, quality, and expansion of the NIH full-length cDNA project: the Mammalian Gene Collection (MGC).</title>
        <authorList>
            <consortium name="The MGC Project Team"/>
        </authorList>
    </citation>
    <scope>NUCLEOTIDE SEQUENCE [LARGE SCALE MRNA] (ISOFORM 1)</scope>
</reference>
<reference key="7">
    <citation type="journal article" date="1997" name="Biochem. Biophys. Res. Commun.">
        <title>Cloning and characterization of Gu/RH-II binding protein.</title>
        <authorList>
            <person name="Valdez B.C."/>
            <person name="Henning D."/>
            <person name="Perlaky L."/>
            <person name="Busch R.K."/>
            <person name="Busch H."/>
        </authorList>
    </citation>
    <scope>NUCLEOTIDE SEQUENCE [MRNA] OF 7-651 (ISOFORM 1)</scope>
    <scope>INTERACTION WITH DDX21</scope>
    <scope>SUBCELLULAR LOCATION</scope>
    <scope>TISSUE SPECIFICITY</scope>
    <source>
        <tissue>B-cell</tissue>
    </source>
</reference>
<reference key="8">
    <citation type="journal article" date="2001" name="Biochem. J.">
        <title>LIM-domain protein cysteine- and glycine-rich protein 2 (CRP2) is a novel marker of hepatic stellate cells and binding partner of the protein inhibitor of activated STAT1.</title>
        <authorList>
            <person name="Weiskirchen R."/>
            <person name="Moser M."/>
            <person name="Weiskirchen S."/>
            <person name="Erdel M."/>
            <person name="Dahmen S."/>
            <person name="Buettner R."/>
            <person name="Gressner A.M."/>
        </authorList>
    </citation>
    <scope>INTERACTION WITH CSRP2</scope>
    <scope>SUBCELLULAR LOCATION</scope>
</reference>
<reference key="9">
    <citation type="journal article" date="2001" name="Mol. Cell">
        <title>Involvement of PIAS1 in the sumoylation of tumor suppressor p53.</title>
        <authorList>
            <person name="Kahyo T."/>
            <person name="Nishida T."/>
            <person name="Yasuda H."/>
        </authorList>
    </citation>
    <scope>FUNCTION</scope>
    <scope>INTERACTION WITH UBE2I; SUMO1 AND TP53</scope>
    <scope>MUTAGENESIS OF CYS-351</scope>
</reference>
<reference key="10">
    <citation type="journal article" date="2001" name="Oncogene">
        <title>Distinct effects of PIAS proteins on androgen-mediated gene activation in prostate cancer cells.</title>
        <authorList>
            <person name="Gross M."/>
            <person name="Liu B."/>
            <person name="Tan J.-A."/>
            <person name="French F.S."/>
            <person name="Carey M."/>
            <person name="Shuai K."/>
        </authorList>
    </citation>
    <scope>TISSUE SPECIFICITY</scope>
</reference>
<reference key="11">
    <citation type="journal article" date="2002" name="J. Biol. Chem.">
        <title>SUMO-1 modification of the C-terminal KVEKVD of Axin is required for JNK activation but has no effect on Wnt signaling.</title>
        <authorList>
            <person name="Rui H.L."/>
            <person name="Fan E."/>
            <person name="Zhou H.M."/>
            <person name="Xu Z."/>
            <person name="Zhang Y."/>
            <person name="Lin S.C."/>
        </authorList>
    </citation>
    <scope>INTERACTION WITH AXIN1</scope>
</reference>
<reference key="12">
    <citation type="journal article" date="2002" name="J. Biol. Chem.">
        <title>Sumoylation of Mdm2 by protein inhibitor of activated STAT (PIAS) and RanBP2 enzymes.</title>
        <authorList>
            <person name="Miyauchi Y."/>
            <person name="Yogosawa S."/>
            <person name="Honda R."/>
            <person name="Nishida T."/>
            <person name="Yasuda H."/>
        </authorList>
    </citation>
    <scope>SUMOYLATION OF MDM2</scope>
    <scope>SUBCELLULAR LOCATION</scope>
</reference>
<reference key="13">
    <citation type="journal article" date="2002" name="EMBO J.">
        <title>Transcription factor Sp3 is silenced through SUMO modification by PIAS1.</title>
        <authorList>
            <person name="Sapetschnig A."/>
            <person name="Rischitor G."/>
            <person name="Braun H."/>
            <person name="Doll A."/>
            <person name="Schergaut M."/>
            <person name="Melchior F."/>
            <person name="Suske G."/>
        </authorList>
    </citation>
    <scope>INTERACTION WITH SP3 AND UBE2I</scope>
</reference>
<reference key="14">
    <citation type="journal article" date="2002" name="Proc. Natl. Acad. Sci. U.S.A.">
        <title>Members of the PIAS family act as SUMO ligases for c-Jun and p53 and repress p53 activity.</title>
        <authorList>
            <person name="Schmidt D."/>
            <person name="Mueller S."/>
        </authorList>
    </citation>
    <scope>FUNCTION</scope>
    <scope>INTERACTION WITH JUN AND TP53</scope>
    <scope>SUMOYLATION</scope>
</reference>
<reference key="15">
    <citation type="journal article" date="2003" name="Genes Dev.">
        <title>SUMO modification of a novel MAR-binding protein, SATB2, modulates immunoglobulin mu gene expression.</title>
        <authorList>
            <person name="Dobreva G."/>
            <person name="Dambacher J."/>
            <person name="Grosschedl R."/>
        </authorList>
    </citation>
    <scope>INTERACTION WITH SATB2</scope>
</reference>
<reference key="16">
    <citation type="journal article" date="2003" name="J. Biol. Chem.">
        <title>PIAS1-mediated sumoylation of focal adhesion kinase activates its autophosphorylation.</title>
        <authorList>
            <person name="Kadare G."/>
            <person name="Toutant M."/>
            <person name="Formstecher E."/>
            <person name="Corvol J.C."/>
            <person name="Carnaud M."/>
            <person name="Boutterin M.C."/>
            <person name="Girault J.A."/>
        </authorList>
    </citation>
    <scope>FUNCTION</scope>
    <scope>INTERACTION WITH PTK2/FAK1</scope>
</reference>
<reference key="17">
    <citation type="journal article" date="2004" name="J. Biol. Chem.">
        <title>Repression of the transactivating capacity of the oncoprotein PLAG1 by SUMOylation.</title>
        <authorList>
            <person name="Van Dyck F."/>
            <person name="Delvaux E.L.D."/>
            <person name="Van de Ven W.J.M."/>
            <person name="Chavez M.V."/>
        </authorList>
    </citation>
    <scope>INTERACTION WITH PLAG1</scope>
</reference>
<reference key="18">
    <citation type="journal article" date="2006" name="Cell">
        <title>Global, in vivo, and site-specific phosphorylation dynamics in signaling networks.</title>
        <authorList>
            <person name="Olsen J.V."/>
            <person name="Blagoev B."/>
            <person name="Gnad F."/>
            <person name="Macek B."/>
            <person name="Kumar C."/>
            <person name="Mortensen P."/>
            <person name="Mann M."/>
        </authorList>
    </citation>
    <scope>IDENTIFICATION BY MASS SPECTROMETRY [LARGE SCALE ANALYSIS]</scope>
    <source>
        <tissue>Cervix carcinoma</tissue>
    </source>
</reference>
<reference key="19">
    <citation type="journal article" date="2006" name="Genes Dev.">
        <title>PIAS1 confers DNA-binding specificity on the Msx1 homeoprotein.</title>
        <authorList>
            <person name="Lee H."/>
            <person name="Quinn J.C."/>
            <person name="Prasanth K.V."/>
            <person name="Swiss V.A."/>
            <person name="Economides K.D."/>
            <person name="Camacho M.M."/>
            <person name="Spector D.L."/>
            <person name="Abate-Shen C."/>
        </authorList>
    </citation>
    <scope>INTERACTION WITH MSX1</scope>
</reference>
<reference key="20">
    <citation type="journal article" date="2006" name="J. Biol. Chem.">
        <title>Sumoylation delimits KLF8 transcriptional activity associated with the cell cycle regulation.</title>
        <authorList>
            <person name="Wei H."/>
            <person name="Wang X."/>
            <person name="Gan B."/>
            <person name="Urvalek A.M."/>
            <person name="Melkoumian Z.K."/>
            <person name="Guan J.-L."/>
            <person name="Zhao J."/>
        </authorList>
    </citation>
    <scope>INTERACTION WITH KLF8</scope>
</reference>
<reference key="21">
    <citation type="journal article" date="2007" name="Cell">
        <title>Proinflammatory stimuli induce IKKalpha-mediated phosphorylation of PIAS1 to restrict inflammation and immunity.</title>
        <authorList>
            <person name="Liu B."/>
            <person name="Yang Y."/>
            <person name="Chernishof V."/>
            <person name="Loo R.R."/>
            <person name="Jang H."/>
            <person name="Tahk S."/>
            <person name="Yang R."/>
            <person name="Mink S."/>
            <person name="Shultz D."/>
            <person name="Bellone C.J."/>
            <person name="Loo J.A."/>
            <person name="Shuai K."/>
        </authorList>
    </citation>
    <scope>INTERACTION WITH CHUK</scope>
</reference>
<reference key="22">
    <citation type="journal article" date="2007" name="Oncogene">
        <title>SUMO modification of the DEAD box protein p68 modulates its transcriptional activity and promotes its interaction with HDAC1.</title>
        <authorList>
            <person name="Jacobs A.M."/>
            <person name="Nicol S.M."/>
            <person name="Hislop R.G."/>
            <person name="Jaffray E.G."/>
            <person name="Hay R.T."/>
            <person name="Fuller-Pace F.V."/>
        </authorList>
    </citation>
    <scope>INTERACTION WITH DDX5</scope>
</reference>
<reference key="23">
    <citation type="journal article" date="2008" name="Proc. Natl. Acad. Sci. U.S.A.">
        <title>A quantitative atlas of mitotic phosphorylation.</title>
        <authorList>
            <person name="Dephoure N."/>
            <person name="Zhou C."/>
            <person name="Villen J."/>
            <person name="Beausoleil S.A."/>
            <person name="Bakalarski C.E."/>
            <person name="Elledge S.J."/>
            <person name="Gygi S.P."/>
        </authorList>
    </citation>
    <scope>PHOSPHORYLATION [LARGE SCALE ANALYSIS] AT SER-503 AND SER-522</scope>
    <scope>IDENTIFICATION BY MASS SPECTROMETRY [LARGE SCALE ANALYSIS]</scope>
    <source>
        <tissue>Cervix carcinoma</tissue>
    </source>
</reference>
<reference key="24">
    <citation type="journal article" date="2009" name="Genes Dev.">
        <title>PRMT1-mediated arginine methylation of PIAS1 regulates STAT1 signaling.</title>
        <authorList>
            <person name="Weber S."/>
            <person name="Maass F."/>
            <person name="Schuemann M."/>
            <person name="Krause E."/>
            <person name="Suske G."/>
            <person name="Bauer U.M."/>
        </authorList>
    </citation>
    <scope>RETRACTED PAPER</scope>
</reference>
<reference key="25">
    <citation type="journal article" date="2011" name="Genes Dev.">
        <title>Retraction. PRMT1-mediated arginine methylation of PIAS1 regulates STAT1 signaling.</title>
        <authorList>
            <person name="Weber S."/>
            <person name="Maass F."/>
            <person name="Schuemann M."/>
            <person name="Krause E."/>
            <person name="Suske G."/>
            <person name="Bauer U.M."/>
        </authorList>
    </citation>
    <scope>RETRACTION NOTICE OF PUBMED:19136629</scope>
</reference>
<reference key="26">
    <citation type="journal article" date="2009" name="Sci. Signal.">
        <title>Quantitative phosphoproteomic analysis of T cell receptor signaling reveals system-wide modulation of protein-protein interactions.</title>
        <authorList>
            <person name="Mayya V."/>
            <person name="Lundgren D.H."/>
            <person name="Hwang S.-I."/>
            <person name="Rezaul K."/>
            <person name="Wu L."/>
            <person name="Eng J.K."/>
            <person name="Rodionov V."/>
            <person name="Han D.K."/>
        </authorList>
    </citation>
    <scope>PHOSPHORYLATION [LARGE SCALE ANALYSIS] AT SER-503 AND SER-510</scope>
    <scope>IDENTIFICATION BY MASS SPECTROMETRY [LARGE SCALE ANALYSIS]</scope>
    <source>
        <tissue>Leukemic T-cell</tissue>
    </source>
</reference>
<reference key="27">
    <citation type="journal article" date="2009" name="PLoS Pathog.">
        <title>Ebola Zaire virus blocks type I interferon production by exploiting the host SUMO modification machinery.</title>
        <authorList>
            <person name="Chang T.H."/>
            <person name="Kubota T."/>
            <person name="Matsuoka M."/>
            <person name="Jones S."/>
            <person name="Bradfute S.B."/>
            <person name="Bray M."/>
            <person name="Ozato K."/>
        </authorList>
    </citation>
    <scope>INTERACTION WITH EBOLAVIRUS VP35 (MICROBIAL INFECTION)</scope>
</reference>
<reference key="28">
    <citation type="journal article" date="2010" name="Sci. Signal.">
        <title>Quantitative phosphoproteomics reveals widespread full phosphorylation site occupancy during mitosis.</title>
        <authorList>
            <person name="Olsen J.V."/>
            <person name="Vermeulen M."/>
            <person name="Santamaria A."/>
            <person name="Kumar C."/>
            <person name="Miller M.L."/>
            <person name="Jensen L.J."/>
            <person name="Gnad F."/>
            <person name="Cox J."/>
            <person name="Jensen T.S."/>
            <person name="Nigg E.A."/>
            <person name="Brunak S."/>
            <person name="Mann M."/>
        </authorList>
    </citation>
    <scope>PHOSPHORYLATION [LARGE SCALE ANALYSIS] AT SER-503</scope>
    <scope>IDENTIFICATION BY MASS SPECTROMETRY [LARGE SCALE ANALYSIS]</scope>
    <source>
        <tissue>Cervix carcinoma</tissue>
    </source>
</reference>
<reference key="29">
    <citation type="journal article" date="2011" name="J. Biol. Chem.">
        <title>SUMOylation and SUMO-interacting motif (SIM) of metastasis tumor antigen 1 (MTA1) synergistically regulate its transcriptional repressor function.</title>
        <authorList>
            <person name="Cong L."/>
            <person name="Pakala S.B."/>
            <person name="Ohshiro K."/>
            <person name="Li D.Q."/>
            <person name="Kumar R."/>
        </authorList>
    </citation>
    <scope>FUNCTION</scope>
    <scope>INTERACTION WITH MTA1</scope>
</reference>
<reference key="30">
    <citation type="journal article" date="2012" name="Proc. Natl. Acad. Sci. U.S.A.">
        <title>N-terminal acetylome analyses and functional insights of the N-terminal acetyltransferase NatB.</title>
        <authorList>
            <person name="Van Damme P."/>
            <person name="Lasa M."/>
            <person name="Polevoda B."/>
            <person name="Gazquez C."/>
            <person name="Elosegui-Artola A."/>
            <person name="Kim D.S."/>
            <person name="De Juan-Pardo E."/>
            <person name="Demeyer K."/>
            <person name="Hole K."/>
            <person name="Larrea E."/>
            <person name="Timmerman E."/>
            <person name="Prieto J."/>
            <person name="Arnesen T."/>
            <person name="Sherman F."/>
            <person name="Gevaert K."/>
            <person name="Aldabe R."/>
        </authorList>
    </citation>
    <scope>ACETYLATION [LARGE SCALE ANALYSIS] AT ALA-2</scope>
    <scope>CLEAVAGE OF INITIATOR METHIONINE [LARGE SCALE ANALYSIS]</scope>
    <scope>IDENTIFICATION BY MASS SPECTROMETRY [LARGE SCALE ANALYSIS]</scope>
</reference>
<reference key="31">
    <citation type="journal article" date="2013" name="J. Proteome Res.">
        <title>Toward a comprehensive characterization of a human cancer cell phosphoproteome.</title>
        <authorList>
            <person name="Zhou H."/>
            <person name="Di Palma S."/>
            <person name="Preisinger C."/>
            <person name="Peng M."/>
            <person name="Polat A.N."/>
            <person name="Heck A.J."/>
            <person name="Mohammed S."/>
        </authorList>
    </citation>
    <scope>PHOSPHORYLATION [LARGE SCALE ANALYSIS] AT SER-485; SER-488 AND SER-503</scope>
    <scope>IDENTIFICATION BY MASS SPECTROMETRY [LARGE SCALE ANALYSIS]</scope>
    <source>
        <tissue>Cervix carcinoma</tissue>
        <tissue>Erythroleukemia</tissue>
    </source>
</reference>
<reference key="32">
    <citation type="journal article" date="2014" name="J. Proteomics">
        <title>An enzyme assisted RP-RPLC approach for in-depth analysis of human liver phosphoproteome.</title>
        <authorList>
            <person name="Bian Y."/>
            <person name="Song C."/>
            <person name="Cheng K."/>
            <person name="Dong M."/>
            <person name="Wang F."/>
            <person name="Huang J."/>
            <person name="Sun D."/>
            <person name="Wang L."/>
            <person name="Ye M."/>
            <person name="Zou H."/>
        </authorList>
    </citation>
    <scope>PHOSPHORYLATION [LARGE SCALE ANALYSIS] AT SER-467; SER-468 AND SER-503</scope>
    <scope>IDENTIFICATION BY MASS SPECTROMETRY [LARGE SCALE ANALYSIS]</scope>
    <source>
        <tissue>Liver</tissue>
    </source>
</reference>
<reference key="33">
    <citation type="journal article" date="2014" name="Nat. Struct. Mol. Biol.">
        <title>Uncovering global SUMOylation signaling networks in a site-specific manner.</title>
        <authorList>
            <person name="Hendriks I.A."/>
            <person name="D'Souza R.C."/>
            <person name="Yang B."/>
            <person name="Verlaan-de Vries M."/>
            <person name="Mann M."/>
            <person name="Vertegaal A.C."/>
        </authorList>
    </citation>
    <scope>SUMOYLATION [LARGE SCALE ANALYSIS] AT LYS-46 AND LYS-238</scope>
    <scope>IDENTIFICATION BY MASS SPECTROMETRY [LARGE SCALE ANALYSIS]</scope>
</reference>
<reference key="34">
    <citation type="journal article" date="2015" name="Cell Rep.">
        <title>SUMO-2 orchestrates chromatin modifiers in response to DNA damage.</title>
        <authorList>
            <person name="Hendriks I.A."/>
            <person name="Treffers L.W."/>
            <person name="Verlaan-de Vries M."/>
            <person name="Olsen J.V."/>
            <person name="Vertegaal A.C."/>
        </authorList>
    </citation>
    <scope>SUMOYLATION [LARGE SCALE ANALYSIS] AT LYS-46; LYS-137 AND LYS-238</scope>
    <scope>IDENTIFICATION BY MASS SPECTROMETRY [LARGE SCALE ANALYSIS]</scope>
</reference>
<reference key="35">
    <citation type="journal article" date="2015" name="Mol. Cell. Proteomics">
        <title>System-wide analysis of SUMOylation dynamics in response to replication stress reveals novel small ubiquitin-like modified target proteins and acceptor lysines relevant for genome stability.</title>
        <authorList>
            <person name="Xiao Z."/>
            <person name="Chang J.G."/>
            <person name="Hendriks I.A."/>
            <person name="Sigurdsson J.O."/>
            <person name="Olsen J.V."/>
            <person name="Vertegaal A.C."/>
        </authorList>
    </citation>
    <scope>SUMOYLATION [LARGE SCALE ANALYSIS] AT LYS-46 AND LYS-137</scope>
    <scope>IDENTIFICATION BY MASS SPECTROMETRY [LARGE SCALE ANALYSIS]</scope>
</reference>
<reference key="36">
    <citation type="journal article" date="2016" name="Sci. Rep.">
        <title>SUMO5, a novel poly-sumo isoform, regulates pml nuclear bodies.</title>
        <authorList>
            <person name="Liang Y.C."/>
            <person name="Lee C.C."/>
            <person name="Yao Y.L."/>
            <person name="Lai C.C."/>
            <person name="Schmitz M.L."/>
            <person name="Yang W.M."/>
        </authorList>
    </citation>
    <scope>INTERACTION WITH SUMO1P1/SUMO5</scope>
</reference>
<reference key="37">
    <citation type="journal article" date="2017" name="Nat. Commun.">
        <title>HSP70-Hrd1 axis precludes the oncorepressor potential of N-terminal misfolded Blimp-1s in lymphoma cells.</title>
        <authorList>
            <person name="Wang W.F."/>
            <person name="Yan L."/>
            <person name="Liu Z."/>
            <person name="Liu L.X."/>
            <person name="Lin J."/>
            <person name="Liu Z.Y."/>
            <person name="Chen X.P."/>
            <person name="Zhang W."/>
            <person name="Xu Z.Z."/>
            <person name="Shi T."/>
            <person name="Li J.M."/>
            <person name="Zhao Y.L."/>
            <person name="Meng G."/>
            <person name="Xia Y."/>
            <person name="Li J.Y."/>
            <person name="Zhu J."/>
        </authorList>
    </citation>
    <scope>INTERACTION WITH PRDM1</scope>
</reference>
<reference key="38">
    <citation type="journal article" date="2017" name="Nat. Struct. Mol. Biol.">
        <title>Site-specific mapping of the human SUMO proteome reveals co-modification with phosphorylation.</title>
        <authorList>
            <person name="Hendriks I.A."/>
            <person name="Lyon D."/>
            <person name="Young C."/>
            <person name="Jensen L.J."/>
            <person name="Vertegaal A.C."/>
            <person name="Nielsen M.L."/>
        </authorList>
    </citation>
    <scope>SUMOYLATION [LARGE SCALE ANALYSIS] AT LYS-40; LYS-46; LYS-137; LYS-238; LYS-453 AND LYS-493</scope>
    <scope>IDENTIFICATION BY MASS SPECTROMETRY [LARGE SCALE ANALYSIS]</scope>
</reference>
<reference key="39">
    <citation type="journal article" date="2017" name="Cell Rep.">
        <title>B Cell Receptor Activation and Chemical Induction Trigger Caspase-Mediated Cleavage of PIAS1 to Facilitate Epstein-Barr Virus Reactivation.</title>
        <authorList>
            <person name="Zhang K."/>
            <person name="Lv D.W."/>
            <person name="Li R."/>
        </authorList>
    </citation>
    <scope>FUNCTION (MICROBIAL INFECTION)</scope>
    <scope>MUTAGENESIS OF ASP-100; ASP-148 AND ASP-433</scope>
</reference>
<reference key="40">
    <citation type="journal article" date="2022" name="Nat. Commun.">
        <title>Crosstalk between SUMOylation and ubiquitylation controls DNA end resection by maintaining MRE11 homeostasis on chromatin.</title>
        <authorList>
            <person name="Zhang T."/>
            <person name="Yang H."/>
            <person name="Zhou Z."/>
            <person name="Bai Y."/>
            <person name="Wang J."/>
            <person name="Wang W."/>
        </authorList>
    </citation>
    <scope>FUNCTION</scope>
</reference>
<reference key="41">
    <citation type="journal article" date="2004" name="J. Biol. Chem.">
        <title>NMR structure of the N-terminal domain of SUMO ligase PIAS1 and its interaction with tumor suppressor p53 and A/T-rich DNA oligomers.</title>
        <authorList>
            <person name="Okubo S."/>
            <person name="Hara F."/>
            <person name="Tsuchida Y."/>
            <person name="Shimotakahara S."/>
            <person name="Suzuki S."/>
            <person name="Hatanaka H."/>
            <person name="Yokoyama S."/>
            <person name="Tanaka H."/>
            <person name="Yasuda H."/>
            <person name="Shindo H."/>
        </authorList>
    </citation>
    <scope>STRUCTURE BY NMR OF 1-65</scope>
    <scope>INTERACTION WITH TP53 AND DNA-BINDING</scope>
    <scope>FUNCTION</scope>
</reference>
<keyword id="KW-0002">3D-structure</keyword>
<keyword id="KW-0007">Acetylation</keyword>
<keyword id="KW-0025">Alternative splicing</keyword>
<keyword id="KW-0963">Cytoplasm</keyword>
<keyword id="KW-0206">Cytoskeleton</keyword>
<keyword id="KW-0238">DNA-binding</keyword>
<keyword id="KW-0945">Host-virus interaction</keyword>
<keyword id="KW-1017">Isopeptide bond</keyword>
<keyword id="KW-0479">Metal-binding</keyword>
<keyword id="KW-0539">Nucleus</keyword>
<keyword id="KW-0597">Phosphoprotein</keyword>
<keyword id="KW-1267">Proteomics identification</keyword>
<keyword id="KW-1185">Reference proteome</keyword>
<keyword id="KW-0677">Repeat</keyword>
<keyword id="KW-0804">Transcription</keyword>
<keyword id="KW-0805">Transcription regulation</keyword>
<keyword id="KW-0808">Transferase</keyword>
<keyword id="KW-0832">Ubl conjugation</keyword>
<keyword id="KW-0833">Ubl conjugation pathway</keyword>
<keyword id="KW-0862">Zinc</keyword>
<keyword id="KW-0863">Zinc-finger</keyword>
<proteinExistence type="evidence at protein level"/>
<accession>O75925</accession>
<accession>B2RB67</accession>
<accession>B3KSY9</accession>
<accession>C5J4B4</accession>
<accession>Q147X4</accession>
<accession>Q99751</accession>
<accession>Q9UN02</accession>
<comment type="function">
    <text evidence="2 9 11 15 17 24 28">Functions as an E3-type small ubiquitin-like modifier (SUMO) ligase, stabilizing the interaction between UBE2I and the substrate, and as a SUMO-tethering factor (PubMed:11583632, PubMed:11867732, PubMed:14500712, PubMed:21965678, PubMed:36050397). Catalyzes sumoylation of various proteins, such as CEBPB, MRE11, MTA1, PTK2 and PML (PubMed:11583632, PubMed:11867732, PubMed:14500712, PubMed:21965678, PubMed:36050397). Plays a crucial role as a transcriptional coregulation in various cellular pathways, including the STAT pathway, the p53 pathway and the steroid hormone signaling pathway (PubMed:11583632, PubMed:11867732). In vitro, binds A/T-rich DNA (PubMed:15133049). The effects of this transcriptional coregulation, transactivation or silencing, may vary depending upon the biological context (PubMed:11583632, PubMed:11867732, PubMed:14500712, PubMed:21965678, PubMed:36050397). Mediates sumoylation of MRE11, stabilizing MRE11 on chromatin during end resection (PubMed:36050397). Sumoylates PML (at 'Lys-65' and 'Lys-160') and PML-RAR and promotes their ubiquitin-mediated degradation (By similarity). PIAS1-mediated sumoylation of PML promotes its interaction with CSNK2A1/CK2 which in turn promotes PML phosphorylation and degradation (By similarity). Enhances the sumoylation of MTA1 and may participate in its paralog-selective sumoylation (PubMed:21965678). Plays a dynamic role in adipogenesis by promoting the SUMOylation and degradation of CEBPB (By similarity). Mediates the nuclear mobility and localization of MSX1 to the nuclear periphery, whereby MSX1 is brought into the proximity of target myoblast differentiation factor genes (By similarity). Also required for the binding of MSX1 to the core enhancer region in target gene promoter regions, independent of its sumoylation activity (By similarity). Capable of binding to the core enhancer region TAAT box in the MYOD1 gene promoter (By similarity).</text>
</comment>
<comment type="function">
    <text evidence="27">(Microbial infection) Restricts Epstein-Barr virus (EBV) lytic replication by acting as an inhibitor for transcription factors involved in lytic gene expression (PubMed:29262325). The virus can use apoptotic caspases to antagonize PIAS1-mediated restriction and express its lytic genes (PubMed:29262325).</text>
</comment>
<comment type="pathway">
    <text>Protein modification; protein sumoylation.</text>
</comment>
<comment type="subunit">
    <text evidence="1 9 10 11 12 13 15 16 17 18 19 20 21 22 24 25 26 29 30">Interacts with NCOA2 and AR. Interacts with NR2C1; the interaction promotes its sumoylation (By similarity). Interacts with DDX21, CSRP2, AXIN1, JUN, UBE2I, SUMO1, SATB2, PLAG1, TP53 and STAT1 (dimer), following IFNA1-stimulation. Interacts with SP3 (preferentially when SUMO-modified). Interacts with KLF8; the interaction results in SUMO ligation and repression of KLF8 transcriptional activity and of its cell cycle progression into G(1) phase. Interacts with CHUK/IKKA; this interaction induces PIAS1 phosphorylation. Interacts with PTK2/FAK1; the interaction promotes its sumoylation. Interacts with DDX5. Interacts with PML (By similarity). Interacts with MTA1. Interacts with SUMO1P1/SUMO5 (PubMed:27211601). Interacts with PRDM1/Blimp-1 (PubMed:28842558). Interacts (via N-terminus) with MSX1 (via C-terminus); the interaction is required for the localization of both proteins to the nuclear periphery and specific binding of MSX1 to the core enhancer region in target gene promoters (PubMed:16600910).</text>
</comment>
<comment type="subunit">
    <text evidence="23">(Microbial infection) Interacts with ebolavirus VP35; this interaction mediates the sumoylation of IRF7 and contributes to the viral inhibition of IFN-type I production.</text>
</comment>
<comment type="interaction">
    <interactant intactId="EBI-629434">
        <id>O75925</id>
    </interactant>
    <interactant intactId="EBI-640741">
        <id>P01023</id>
        <label>A2M</label>
    </interactant>
    <organismsDiffer>false</organismsDiffer>
    <experiments>3</experiments>
</comment>
<comment type="interaction">
    <interactant intactId="EBI-629434">
        <id>O75925</id>
    </interactant>
    <interactant intactId="EBI-25928834">
        <id>A0A0S2Z5Q7</id>
        <label>ALS2</label>
    </interactant>
    <organismsDiffer>false</organismsDiffer>
    <experiments>3</experiments>
</comment>
<comment type="interaction">
    <interactant intactId="EBI-629434">
        <id>O75925</id>
    </interactant>
    <interactant intactId="EBI-21535880">
        <id>Q92870-2</id>
        <label>APBB2</label>
    </interactant>
    <organismsDiffer>false</organismsDiffer>
    <experiments>3</experiments>
</comment>
<comment type="interaction">
    <interactant intactId="EBI-629434">
        <id>O75925</id>
    </interactant>
    <interactant intactId="EBI-750475">
        <id>P45381</id>
        <label>ASPA</label>
    </interactant>
    <organismsDiffer>false</organismsDiffer>
    <experiments>3</experiments>
</comment>
<comment type="interaction">
    <interactant intactId="EBI-629434">
        <id>O75925</id>
    </interactant>
    <interactant intactId="EBI-930964">
        <id>P54253</id>
        <label>ATXN1</label>
    </interactant>
    <organismsDiffer>false</organismsDiffer>
    <experiments>7</experiments>
</comment>
<comment type="interaction">
    <interactant intactId="EBI-629434">
        <id>O75925</id>
    </interactant>
    <interactant intactId="EBI-702390">
        <id>Q9UBB4</id>
        <label>ATXN10</label>
    </interactant>
    <organismsDiffer>false</organismsDiffer>
    <experiments>3</experiments>
</comment>
<comment type="interaction">
    <interactant intactId="EBI-629434">
        <id>O75925</id>
    </interactant>
    <interactant intactId="EBI-946046">
        <id>P54252</id>
        <label>ATXN3</label>
    </interactant>
    <organismsDiffer>false</organismsDiffer>
    <experiments>9</experiments>
</comment>
<comment type="interaction">
    <interactant intactId="EBI-629434">
        <id>O75925</id>
    </interactant>
    <interactant intactId="EBI-2339650">
        <id>Q9UKL3</id>
        <label>CASP8AP2</label>
    </interactant>
    <organismsDiffer>false</organismsDiffer>
    <experiments>4</experiments>
</comment>
<comment type="interaction">
    <interactant intactId="EBI-629434">
        <id>O75925</id>
    </interactant>
    <interactant intactId="EBI-355710">
        <id>P48643</id>
        <label>CCT5</label>
    </interactant>
    <organismsDiffer>false</organismsDiffer>
    <experiments>3</experiments>
</comment>
<comment type="interaction">
    <interactant intactId="EBI-629434">
        <id>O75925</id>
    </interactant>
    <interactant intactId="EBI-10976677">
        <id>G5E9A7</id>
        <label>DMWD</label>
    </interactant>
    <organismsDiffer>false</organismsDiffer>
    <experiments>3</experiments>
</comment>
<comment type="interaction">
    <interactant intactId="EBI-629434">
        <id>O75925</id>
    </interactant>
    <interactant intactId="EBI-21603100">
        <id>P26378-2</id>
        <label>ELAVL4</label>
    </interactant>
    <organismsDiffer>false</organismsDiffer>
    <experiments>3</experiments>
</comment>
<comment type="interaction">
    <interactant intactId="EBI-629434">
        <id>O75925</id>
    </interactant>
    <interactant intactId="EBI-16466949">
        <id>Q13216-2</id>
        <label>ERCC8</label>
    </interactant>
    <organismsDiffer>false</organismsDiffer>
    <experiments>3</experiments>
</comment>
<comment type="interaction">
    <interactant intactId="EBI-629434">
        <id>O75925</id>
    </interactant>
    <interactant intactId="EBI-949340">
        <id>Q16595</id>
        <label>FXN</label>
    </interactant>
    <organismsDiffer>false</organismsDiffer>
    <experiments>3</experiments>
</comment>
<comment type="interaction">
    <interactant intactId="EBI-629434">
        <id>O75925</id>
    </interactant>
    <interactant intactId="EBI-1955541">
        <id>Q53GS7</id>
        <label>GLE1</label>
    </interactant>
    <organismsDiffer>false</organismsDiffer>
    <experiments>3</experiments>
</comment>
<comment type="interaction">
    <interactant intactId="EBI-629434">
        <id>O75925</id>
    </interactant>
    <interactant intactId="EBI-747754">
        <id>P28799</id>
        <label>GRN</label>
    </interactant>
    <organismsDiffer>false</organismsDiffer>
    <experiments>3</experiments>
</comment>
<comment type="interaction">
    <interactant intactId="EBI-629434">
        <id>O75925</id>
    </interactant>
    <interactant intactId="EBI-7133736">
        <id>P07686</id>
        <label>HEXB</label>
    </interactant>
    <organismsDiffer>false</organismsDiffer>
    <experiments>3</experiments>
</comment>
<comment type="interaction">
    <interactant intactId="EBI-629434">
        <id>O75925</id>
    </interactant>
    <interactant intactId="EBI-12690664">
        <id>P28358</id>
        <label>HOXD10</label>
    </interactant>
    <organismsDiffer>false</organismsDiffer>
    <experiments>3</experiments>
</comment>
<comment type="interaction">
    <interactant intactId="EBI-629434">
        <id>O75925</id>
    </interactant>
    <interactant intactId="EBI-352682">
        <id>P04792</id>
        <label>HSPB1</label>
    </interactant>
    <organismsDiffer>false</organismsDiffer>
    <experiments>3</experiments>
</comment>
<comment type="interaction">
    <interactant intactId="EBI-629434">
        <id>O75925</id>
    </interactant>
    <interactant intactId="EBI-517086">
        <id>O43464</id>
        <label>HTRA2</label>
    </interactant>
    <organismsDiffer>false</organismsDiffer>
    <experiments>3</experiments>
</comment>
<comment type="interaction">
    <interactant intactId="EBI-629434">
        <id>O75925</id>
    </interactant>
    <interactant intactId="EBI-466029">
        <id>P42858</id>
        <label>HTT</label>
    </interactant>
    <organismsDiffer>false</organismsDiffer>
    <experiments>19</experiments>
</comment>
<comment type="interaction">
    <interactant intactId="EBI-629434">
        <id>O75925</id>
    </interactant>
    <interactant intactId="EBI-10975473">
        <id>O60333-2</id>
        <label>KIF1B</label>
    </interactant>
    <organismsDiffer>false</organismsDiffer>
    <experiments>3</experiments>
</comment>
<comment type="interaction">
    <interactant intactId="EBI-629434">
        <id>O75925</id>
    </interactant>
    <interactant intactId="EBI-351935">
        <id>P02545</id>
        <label>LMNA</label>
    </interactant>
    <organismsDiffer>false</organismsDiffer>
    <experiments>3</experiments>
</comment>
<comment type="interaction">
    <interactant intactId="EBI-629434">
        <id>O75925</id>
    </interactant>
    <interactant intactId="EBI-351953">
        <id>P02545-2</id>
        <label>LMNA</label>
    </interactant>
    <organismsDiffer>false</organismsDiffer>
    <experiments>3</experiments>
</comment>
<comment type="interaction">
    <interactant intactId="EBI-629434">
        <id>O75925</id>
    </interactant>
    <interactant intactId="EBI-867196">
        <id>Q9UIS9</id>
        <label>MBD1</label>
    </interactant>
    <organismsDiffer>false</organismsDiffer>
    <experiments>3</experiments>
</comment>
<comment type="interaction">
    <interactant intactId="EBI-629434">
        <id>O75925</id>
    </interactant>
    <interactant intactId="EBI-1189067">
        <id>P51608</id>
        <label>MECP2</label>
    </interactant>
    <organismsDiffer>false</organismsDiffer>
    <experiments>3</experiments>
</comment>
<comment type="interaction">
    <interactant intactId="EBI-629434">
        <id>O75925</id>
    </interactant>
    <interactant intactId="EBI-713665">
        <id>P19404</id>
        <label>NDUFV2</label>
    </interactant>
    <organismsDiffer>false</organismsDiffer>
    <experiments>3</experiments>
</comment>
<comment type="interaction">
    <interactant intactId="EBI-629434">
        <id>O75925</id>
    </interactant>
    <interactant intactId="EBI-1014472">
        <id>P35240</id>
        <label>NF2</label>
    </interactant>
    <organismsDiffer>false</organismsDiffer>
    <experiments>3</experiments>
</comment>
<comment type="interaction">
    <interactant intactId="EBI-629434">
        <id>O75925</id>
    </interactant>
    <interactant intactId="EBI-1014514">
        <id>P35240-4</id>
        <label>NF2</label>
    </interactant>
    <organismsDiffer>false</organismsDiffer>
    <experiments>3</experiments>
</comment>
<comment type="interaction">
    <interactant intactId="EBI-629434">
        <id>O75925</id>
    </interactant>
    <interactant intactId="EBI-1391623">
        <id>P29474</id>
        <label>NOS3</label>
    </interactant>
    <organismsDiffer>false</organismsDiffer>
    <experiments>3</experiments>
</comment>
<comment type="interaction">
    <interactant intactId="EBI-629434">
        <id>O75925</id>
    </interactant>
    <interactant intactId="EBI-988601">
        <id>O43933</id>
        <label>PEX1</label>
    </interactant>
    <organismsDiffer>false</organismsDiffer>
    <experiments>3</experiments>
</comment>
<comment type="interaction">
    <interactant intactId="EBI-629434">
        <id>O75925</id>
    </interactant>
    <interactant intactId="EBI-5238811">
        <id>O00628</id>
        <label>PEX7</label>
    </interactant>
    <organismsDiffer>false</organismsDiffer>
    <experiments>3</experiments>
</comment>
<comment type="interaction">
    <interactant intactId="EBI-629434">
        <id>O75925</id>
    </interactant>
    <interactant intactId="EBI-721853">
        <id>O14832</id>
        <label>PHYH</label>
    </interactant>
    <organismsDiffer>false</organismsDiffer>
    <experiments>3</experiments>
</comment>
<comment type="interaction">
    <interactant intactId="EBI-629434">
        <id>O75925</id>
    </interactant>
    <interactant intactId="EBI-1237011">
        <id>P50897</id>
        <label>PPT1</label>
    </interactant>
    <organismsDiffer>false</organismsDiffer>
    <experiments>3</experiments>
</comment>
<comment type="interaction">
    <interactant intactId="EBI-629434">
        <id>O75925</id>
    </interactant>
    <interactant intactId="EBI-948789">
        <id>O75626</id>
        <label>PRDM1</label>
    </interactant>
    <organismsDiffer>false</organismsDiffer>
    <experiments>2</experiments>
</comment>
<comment type="interaction">
    <interactant intactId="EBI-629434">
        <id>O75925</id>
    </interactant>
    <interactant intactId="EBI-949799">
        <id>P05129</id>
        <label>PRKCG</label>
    </interactant>
    <organismsDiffer>false</organismsDiffer>
    <experiments>3</experiments>
</comment>
<comment type="interaction">
    <interactant intactId="EBI-629434">
        <id>O75925</id>
    </interactant>
    <interactant intactId="EBI-752074">
        <id>P41219</id>
        <label>PRPH</label>
    </interactant>
    <organismsDiffer>false</organismsDiffer>
    <experiments>3</experiments>
</comment>
<comment type="interaction">
    <interactant intactId="EBI-629434">
        <id>O75925</id>
    </interactant>
    <interactant intactId="EBI-395421">
        <id>Q16637</id>
        <label>SMN2</label>
    </interactant>
    <organismsDiffer>false</organismsDiffer>
    <experiments>3</experiments>
</comment>
<comment type="interaction">
    <interactant intactId="EBI-629434">
        <id>O75925</id>
    </interactant>
    <interactant intactId="EBI-985879">
        <id>P37840</id>
        <label>SNCA</label>
    </interactant>
    <organismsDiffer>false</organismsDiffer>
    <experiments>3</experiments>
</comment>
<comment type="interaction">
    <interactant intactId="EBI-629434">
        <id>O75925</id>
    </interactant>
    <interactant intactId="EBI-727106">
        <id>Q16143</id>
        <label>SNCB</label>
    </interactant>
    <organismsDiffer>false</organismsDiffer>
    <experiments>3</experiments>
</comment>
<comment type="interaction">
    <interactant intactId="EBI-629434">
        <id>O75925</id>
    </interactant>
    <interactant intactId="EBI-5235340">
        <id>Q7Z699</id>
        <label>SPRED1</label>
    </interactant>
    <organismsDiffer>false</organismsDiffer>
    <experiments>3</experiments>
</comment>
<comment type="interaction">
    <interactant intactId="EBI-629434">
        <id>O75925</id>
    </interactant>
    <interactant intactId="EBI-25912847">
        <id>Q6NUL7</id>
        <label>SPTLC1</label>
    </interactant>
    <organismsDiffer>false</organismsDiffer>
    <experiments>3</experiments>
</comment>
<comment type="interaction">
    <interactant intactId="EBI-629434">
        <id>O75925</id>
    </interactant>
    <interactant intactId="EBI-2902553">
        <id>Q9NUW8</id>
        <label>TDP1</label>
    </interactant>
    <organismsDiffer>false</organismsDiffer>
    <experiments>3</experiments>
</comment>
<comment type="interaction">
    <interactant intactId="EBI-629434">
        <id>O75925</id>
    </interactant>
    <interactant intactId="EBI-366083">
        <id>P04637</id>
        <label>TP53</label>
    </interactant>
    <organismsDiffer>false</organismsDiffer>
    <experiments>4</experiments>
</comment>
<comment type="interaction">
    <interactant intactId="EBI-629434">
        <id>O75925</id>
    </interactant>
    <interactant intactId="EBI-720609">
        <id>O76024</id>
        <label>WFS1</label>
    </interactant>
    <organismsDiffer>false</organismsDiffer>
    <experiments>3</experiments>
</comment>
<comment type="interaction">
    <interactant intactId="EBI-629434">
        <id>O75925</id>
    </interactant>
    <interactant intactId="EBI-1048893">
        <id>P54577</id>
        <label>YARS1</label>
    </interactant>
    <organismsDiffer>false</organismsDiffer>
    <experiments>3</experiments>
</comment>
<comment type="interaction">
    <interactant intactId="EBI-629434">
        <id>O75925</id>
    </interactant>
    <interactant intactId="EBI-25878161">
        <id>Q9P1N4</id>
    </interactant>
    <organismsDiffer>false</organismsDiffer>
    <experiments>3</experiments>
</comment>
<comment type="interaction">
    <interactant intactId="EBI-629434">
        <id>O75925</id>
    </interactant>
    <interactant intactId="EBI-8826488">
        <id>PRO_0000037946</id>
        <dbReference type="UniProtKB" id="P29991"/>
    </interactant>
    <organismsDiffer>true</organismsDiffer>
    <experiments>3</experiments>
</comment>
<comment type="subcellular location">
    <subcellularLocation>
        <location evidence="2">Nucleus</location>
    </subcellularLocation>
    <subcellularLocation>
        <location evidence="14 29">Nucleus speckle</location>
    </subcellularLocation>
    <subcellularLocation>
        <location evidence="2">Nucleus</location>
        <location evidence="2">PML body</location>
    </subcellularLocation>
    <subcellularLocation>
        <location evidence="10">Cytoplasm</location>
        <location evidence="10">Cytoskeleton</location>
    </subcellularLocation>
    <text evidence="2 10">Interaction with CSRP2 may induce a partial redistribution along the cytoskeleton (PubMed:11672422). Interaction with MSX1 is required for localization to the nuclear periphery (By similarity).</text>
</comment>
<comment type="alternative products">
    <event type="alternative splicing"/>
    <isoform>
        <id>O75925-1</id>
        <name>1</name>
        <sequence type="displayed"/>
    </isoform>
    <isoform>
        <id>O75925-2</id>
        <name>2</name>
        <sequence type="described" ref="VSP_056219"/>
    </isoform>
    <isoform>
        <id>O75925-3</id>
        <name>3</name>
        <sequence type="described" ref="VSP_057195 VSP_057196"/>
    </isoform>
</comment>
<comment type="tissue specificity">
    <text evidence="8 29">Expressed in numerous tissues with highest level in testis.</text>
</comment>
<comment type="domain">
    <text>The LXXLL motif is a transcriptional coregulator signature.</text>
</comment>
<comment type="domain">
    <text evidence="1">The SP-RING-type domain is required for promoting EKLF sumoylation.</text>
</comment>
<comment type="PTM">
    <text evidence="11 14">Sumoylated.</text>
</comment>
<comment type="similarity">
    <text evidence="33">Belongs to the PIAS family.</text>
</comment>
<comment type="caution">
    <text evidence="34 35">A paper showing that PRMT1-mediated arginine methylation of PIAS1 regulates STAT1 signaling has been retracted, because some of the data was found to be deliberately falsified.</text>
</comment>
<sequence length="651" mass="71836">MADSAELKQMVMSLRVSELQVLLGYAGRNKHGRKHELLTKALHLLKAGCSPAVQMKIKELYRRRFPQKIMTPADLSIPNVHSSPMPATLSPSTIPQLTYDGHPASSPLLPVSLLGPKHELELPHLTSALHPVHPDIKLQKLPFYDLLDELIKPTSLASDNSQRFRETCFAFALTPQQVQQISSSMDISGTKCDFTVQVQLRFCLSETSCPQEDHFPPNLCVKVNTKPCSLPGYLPPTKNGVEPKRPSRPINITSLVRLSTTVPNTIVVSWTAEIGRNYSMAVYLVKQLSSTVLLQRLRAKGIRNPDHSRALIKEKLTADPDSEIATTSLRVSLLCPLGKMRLTIPCRALTCSHLQCFDATLYIQMNEKKPTWVCPVCDKKAPYEHLIIDGLFMEILKYCTDCDEIQFKEDGTWAPMRSKKEVQEVSASYNGVDGCLSSTLEHQVASHHQSSNKNKKVEVIDLTIDSSSDEEEEEPSAKRTCPSLSPTSPLNNKGILSLPHQASPVSRTPSLPAVDTSYINTSLIQDYRHPFHMTPMPYDLQGLDFFPFLSGDNQHYNTSLLAAAAAAVSDDQDLLHSSRFFPYTSSQMFLDQLSAGGSTSLPTTNGSSSGSNSSLVSSNSLRESHSHTVTNRSSTDTASIFGIIPDIISLD</sequence>